<comment type="function">
    <text evidence="1">Involved in transcription antitermination. Required for transcription of ribosomal RNA (rRNA) genes. Binds specifically to the boxA antiterminator sequence of the ribosomal RNA (rrn) operons.</text>
</comment>
<comment type="similarity">
    <text evidence="1 2">Belongs to the NusB family.</text>
</comment>
<gene>
    <name evidence="1" type="primary">nusB</name>
    <name type="ordered locus">SAV1524</name>
</gene>
<evidence type="ECO:0000255" key="1">
    <source>
        <dbReference type="HAMAP-Rule" id="MF_00073"/>
    </source>
</evidence>
<evidence type="ECO:0000305" key="2"/>
<name>NUSB_STAAM</name>
<keyword id="KW-0694">RNA-binding</keyword>
<keyword id="KW-0804">Transcription</keyword>
<keyword id="KW-0889">Transcription antitermination</keyword>
<keyword id="KW-0805">Transcription regulation</keyword>
<proteinExistence type="inferred from homology"/>
<organism>
    <name type="scientific">Staphylococcus aureus (strain Mu50 / ATCC 700699)</name>
    <dbReference type="NCBI Taxonomy" id="158878"/>
    <lineage>
        <taxon>Bacteria</taxon>
        <taxon>Bacillati</taxon>
        <taxon>Bacillota</taxon>
        <taxon>Bacilli</taxon>
        <taxon>Bacillales</taxon>
        <taxon>Staphylococcaceae</taxon>
        <taxon>Staphylococcus</taxon>
    </lineage>
</organism>
<protein>
    <recommendedName>
        <fullName evidence="1">Transcription antitermination protein NusB</fullName>
    </recommendedName>
    <alternativeName>
        <fullName evidence="1">Antitermination factor NusB</fullName>
    </alternativeName>
</protein>
<sequence>MSRKESRVQAFQTLFQLEMKDSDLTINEAISFIKDDNPDLDFEFIHWLVSGVKDHEPVLDETISPYLKDWTIARLLKTDRIILRMATYEILHSDTPAKVVMNEAVELTKQFSDDDHYKFINGVLSNIKK</sequence>
<accession>P65577</accession>
<accession>Q99TW9</accession>
<feature type="chain" id="PRO_0000176578" description="Transcription antitermination protein NusB">
    <location>
        <begin position="1"/>
        <end position="129"/>
    </location>
</feature>
<reference key="1">
    <citation type="journal article" date="2001" name="Lancet">
        <title>Whole genome sequencing of meticillin-resistant Staphylococcus aureus.</title>
        <authorList>
            <person name="Kuroda M."/>
            <person name="Ohta T."/>
            <person name="Uchiyama I."/>
            <person name="Baba T."/>
            <person name="Yuzawa H."/>
            <person name="Kobayashi I."/>
            <person name="Cui L."/>
            <person name="Oguchi A."/>
            <person name="Aoki K."/>
            <person name="Nagai Y."/>
            <person name="Lian J.-Q."/>
            <person name="Ito T."/>
            <person name="Kanamori M."/>
            <person name="Matsumaru H."/>
            <person name="Maruyama A."/>
            <person name="Murakami H."/>
            <person name="Hosoyama A."/>
            <person name="Mizutani-Ui Y."/>
            <person name="Takahashi N.K."/>
            <person name="Sawano T."/>
            <person name="Inoue R."/>
            <person name="Kaito C."/>
            <person name="Sekimizu K."/>
            <person name="Hirakawa H."/>
            <person name="Kuhara S."/>
            <person name="Goto S."/>
            <person name="Yabuzaki J."/>
            <person name="Kanehisa M."/>
            <person name="Yamashita A."/>
            <person name="Oshima K."/>
            <person name="Furuya K."/>
            <person name="Yoshino C."/>
            <person name="Shiba T."/>
            <person name="Hattori M."/>
            <person name="Ogasawara N."/>
            <person name="Hayashi H."/>
            <person name="Hiramatsu K."/>
        </authorList>
    </citation>
    <scope>NUCLEOTIDE SEQUENCE [LARGE SCALE GENOMIC DNA]</scope>
    <source>
        <strain>Mu50 / ATCC 700699</strain>
    </source>
</reference>
<dbReference type="EMBL" id="BA000017">
    <property type="protein sequence ID" value="BAB57686.1"/>
    <property type="molecule type" value="Genomic_DNA"/>
</dbReference>
<dbReference type="RefSeq" id="WP_000087385.1">
    <property type="nucleotide sequence ID" value="NC_002758.2"/>
</dbReference>
<dbReference type="SMR" id="P65577"/>
<dbReference type="KEGG" id="sav:SAV1524"/>
<dbReference type="HOGENOM" id="CLU_087843_3_3_9"/>
<dbReference type="PhylomeDB" id="P65577"/>
<dbReference type="Proteomes" id="UP000002481">
    <property type="component" value="Chromosome"/>
</dbReference>
<dbReference type="GO" id="GO:0005829">
    <property type="term" value="C:cytosol"/>
    <property type="evidence" value="ECO:0007669"/>
    <property type="project" value="TreeGrafter"/>
</dbReference>
<dbReference type="GO" id="GO:0003723">
    <property type="term" value="F:RNA binding"/>
    <property type="evidence" value="ECO:0007669"/>
    <property type="project" value="UniProtKB-UniRule"/>
</dbReference>
<dbReference type="GO" id="GO:0006353">
    <property type="term" value="P:DNA-templated transcription termination"/>
    <property type="evidence" value="ECO:0007669"/>
    <property type="project" value="UniProtKB-UniRule"/>
</dbReference>
<dbReference type="GO" id="GO:0031564">
    <property type="term" value="P:transcription antitermination"/>
    <property type="evidence" value="ECO:0007669"/>
    <property type="project" value="UniProtKB-KW"/>
</dbReference>
<dbReference type="FunFam" id="1.10.940.10:FF:000011">
    <property type="entry name" value="Transcription antitermination protein NusB"/>
    <property type="match status" value="1"/>
</dbReference>
<dbReference type="Gene3D" id="1.10.940.10">
    <property type="entry name" value="NusB-like"/>
    <property type="match status" value="1"/>
</dbReference>
<dbReference type="HAMAP" id="MF_00073">
    <property type="entry name" value="NusB"/>
    <property type="match status" value="1"/>
</dbReference>
<dbReference type="InterPro" id="IPR035926">
    <property type="entry name" value="NusB-like_sf"/>
</dbReference>
<dbReference type="InterPro" id="IPR011605">
    <property type="entry name" value="NusB_fam"/>
</dbReference>
<dbReference type="InterPro" id="IPR006027">
    <property type="entry name" value="NusB_RsmB_TIM44"/>
</dbReference>
<dbReference type="NCBIfam" id="TIGR01951">
    <property type="entry name" value="nusB"/>
    <property type="match status" value="1"/>
</dbReference>
<dbReference type="PANTHER" id="PTHR11078:SF3">
    <property type="entry name" value="ANTITERMINATION NUSB DOMAIN-CONTAINING PROTEIN"/>
    <property type="match status" value="1"/>
</dbReference>
<dbReference type="PANTHER" id="PTHR11078">
    <property type="entry name" value="N UTILIZATION SUBSTANCE PROTEIN B-RELATED"/>
    <property type="match status" value="1"/>
</dbReference>
<dbReference type="Pfam" id="PF01029">
    <property type="entry name" value="NusB"/>
    <property type="match status" value="1"/>
</dbReference>
<dbReference type="SUPFAM" id="SSF48013">
    <property type="entry name" value="NusB-like"/>
    <property type="match status" value="1"/>
</dbReference>